<protein>
    <recommendedName>
        <fullName>Gonadotropin subunit beta-1</fullName>
    </recommendedName>
    <alternativeName>
        <fullName>GTH-I-beta</fullName>
    </alternativeName>
    <alternativeName>
        <fullName>Gonadotropin beta-I chain</fullName>
    </alternativeName>
</protein>
<reference key="1">
    <citation type="journal article" date="1999" name="Gen. Comp. Endocrinol.">
        <title>Duality of gonadotropin in a primitive teleost, Japanese eel (Anguilla japonica).</title>
        <authorList>
            <person name="Yoshiura Y."/>
            <person name="Suetake H."/>
            <person name="Aida K."/>
        </authorList>
    </citation>
    <scope>NUCLEOTIDE SEQUENCE [MRNA]</scope>
    <source>
        <tissue>Pituitary</tissue>
    </source>
</reference>
<dbReference type="EMBL" id="AB016169">
    <property type="protein sequence ID" value="BAA36546.1"/>
    <property type="molecule type" value="mRNA"/>
</dbReference>
<dbReference type="SMR" id="Q9YGK3"/>
<dbReference type="GlyCosmos" id="Q9YGK3">
    <property type="glycosylation" value="2 sites, No reported glycans"/>
</dbReference>
<dbReference type="GO" id="GO:0005737">
    <property type="term" value="C:cytoplasm"/>
    <property type="evidence" value="ECO:0007669"/>
    <property type="project" value="TreeGrafter"/>
</dbReference>
<dbReference type="GO" id="GO:0005615">
    <property type="term" value="C:extracellular space"/>
    <property type="evidence" value="ECO:0007669"/>
    <property type="project" value="TreeGrafter"/>
</dbReference>
<dbReference type="GO" id="GO:0005179">
    <property type="term" value="F:hormone activity"/>
    <property type="evidence" value="ECO:0007669"/>
    <property type="project" value="UniProtKB-KW"/>
</dbReference>
<dbReference type="GO" id="GO:0007186">
    <property type="term" value="P:G protein-coupled receptor signaling pathway"/>
    <property type="evidence" value="ECO:0007669"/>
    <property type="project" value="TreeGrafter"/>
</dbReference>
<dbReference type="GO" id="GO:0030728">
    <property type="term" value="P:ovulation"/>
    <property type="evidence" value="ECO:0007669"/>
    <property type="project" value="TreeGrafter"/>
</dbReference>
<dbReference type="CDD" id="cd00069">
    <property type="entry name" value="GHB_like"/>
    <property type="match status" value="1"/>
</dbReference>
<dbReference type="FunFam" id="2.10.90.10:FF:000007">
    <property type="entry name" value="Luteinizing hormone beta subunit"/>
    <property type="match status" value="1"/>
</dbReference>
<dbReference type="Gene3D" id="2.10.90.10">
    <property type="entry name" value="Cystine-knot cytokines"/>
    <property type="match status" value="1"/>
</dbReference>
<dbReference type="InterPro" id="IPR029034">
    <property type="entry name" value="Cystine-knot_cytokine"/>
</dbReference>
<dbReference type="InterPro" id="IPR006208">
    <property type="entry name" value="Glyco_hormone_CN"/>
</dbReference>
<dbReference type="InterPro" id="IPR001545">
    <property type="entry name" value="Gonadotropin_bsu"/>
</dbReference>
<dbReference type="InterPro" id="IPR018245">
    <property type="entry name" value="Gonadotropin_bsu_CS"/>
</dbReference>
<dbReference type="PANTHER" id="PTHR11515">
    <property type="entry name" value="GLYCOPROTEIN HORMONE BETA CHAIN"/>
    <property type="match status" value="1"/>
</dbReference>
<dbReference type="PANTHER" id="PTHR11515:SF11">
    <property type="entry name" value="LUTROPIN SUBUNIT BETA"/>
    <property type="match status" value="1"/>
</dbReference>
<dbReference type="Pfam" id="PF00007">
    <property type="entry name" value="Cys_knot"/>
    <property type="match status" value="1"/>
</dbReference>
<dbReference type="SMART" id="SM00068">
    <property type="entry name" value="GHB"/>
    <property type="match status" value="1"/>
</dbReference>
<dbReference type="SUPFAM" id="SSF57501">
    <property type="entry name" value="Cystine-knot cytokines"/>
    <property type="match status" value="1"/>
</dbReference>
<dbReference type="PROSITE" id="PS00261">
    <property type="entry name" value="GLYCO_HORMONE_BETA_1"/>
    <property type="match status" value="1"/>
</dbReference>
<dbReference type="PROSITE" id="PS00689">
    <property type="entry name" value="GLYCO_HORMONE_BETA_2"/>
    <property type="match status" value="1"/>
</dbReference>
<sequence>MHLAVTALCLTLAPVLARASTSCGLANISISVENEECGGCITFNTTACAGLCFTQDSVYKSSLKSYPQQACNFRDVVYETVHLPGCPSGMDLHFTYPVALSCECSKCNTDSTDCGPLNTEVSGCLTH</sequence>
<proteinExistence type="evidence at transcript level"/>
<organism>
    <name type="scientific">Anguilla japonica</name>
    <name type="common">Japanese eel</name>
    <dbReference type="NCBI Taxonomy" id="7937"/>
    <lineage>
        <taxon>Eukaryota</taxon>
        <taxon>Metazoa</taxon>
        <taxon>Chordata</taxon>
        <taxon>Craniata</taxon>
        <taxon>Vertebrata</taxon>
        <taxon>Euteleostomi</taxon>
        <taxon>Actinopterygii</taxon>
        <taxon>Neopterygii</taxon>
        <taxon>Teleostei</taxon>
        <taxon>Anguilliformes</taxon>
        <taxon>Anguillidae</taxon>
        <taxon>Anguilla</taxon>
    </lineage>
</organism>
<accession>Q9YGK3</accession>
<keyword id="KW-1015">Disulfide bond</keyword>
<keyword id="KW-0325">Glycoprotein</keyword>
<keyword id="KW-0372">Hormone</keyword>
<keyword id="KW-0964">Secreted</keyword>
<keyword id="KW-0732">Signal</keyword>
<gene>
    <name type="primary">cgba</name>
</gene>
<comment type="function">
    <text>Involved in gametogenesis and steroidogenesis.</text>
</comment>
<comment type="subunit">
    <text>Heterodimer of an alpha and a beta chain.</text>
</comment>
<comment type="subcellular location">
    <subcellularLocation>
        <location>Secreted</location>
    </subcellularLocation>
</comment>
<comment type="similarity">
    <text evidence="3">Belongs to the glycoprotein hormones subunit beta family.</text>
</comment>
<feature type="signal peptide" evidence="2">
    <location>
        <begin position="1"/>
        <end position="22"/>
    </location>
</feature>
<feature type="chain" id="PRO_0000011679" description="Gonadotropin subunit beta-1">
    <location>
        <begin position="23"/>
        <end position="127"/>
    </location>
</feature>
<feature type="glycosylation site" description="N-linked (GlcNAc...) asparagine" evidence="2">
    <location>
        <position position="27"/>
    </location>
</feature>
<feature type="glycosylation site" description="N-linked (GlcNAc...) asparagine" evidence="2">
    <location>
        <position position="44"/>
    </location>
</feature>
<feature type="disulfide bond" evidence="1">
    <location>
        <begin position="23"/>
        <end position="71"/>
    </location>
</feature>
<feature type="disulfide bond" evidence="1">
    <location>
        <begin position="37"/>
        <end position="86"/>
    </location>
</feature>
<feature type="disulfide bond" evidence="1">
    <location>
        <begin position="40"/>
        <end position="124"/>
    </location>
</feature>
<feature type="disulfide bond" evidence="1">
    <location>
        <begin position="48"/>
        <end position="102"/>
    </location>
</feature>
<feature type="disulfide bond" evidence="1">
    <location>
        <begin position="52"/>
        <end position="104"/>
    </location>
</feature>
<feature type="disulfide bond" evidence="1">
    <location>
        <begin position="107"/>
        <end position="114"/>
    </location>
</feature>
<evidence type="ECO:0000250" key="1"/>
<evidence type="ECO:0000255" key="2"/>
<evidence type="ECO:0000305" key="3"/>
<name>GTHB1_ANGJA</name>